<feature type="chain" id="PRO_1000005012" description="Peptide chain release factor 2">
    <location>
        <begin position="1"/>
        <end position="365"/>
    </location>
</feature>
<feature type="modified residue" description="N5-methylglutamine" evidence="1">
    <location>
        <position position="249"/>
    </location>
</feature>
<gene>
    <name evidence="1" type="primary">prfB</name>
    <name type="ordered locus">SAK_0668</name>
</gene>
<evidence type="ECO:0000255" key="1">
    <source>
        <dbReference type="HAMAP-Rule" id="MF_00094"/>
    </source>
</evidence>
<reference key="1">
    <citation type="journal article" date="2005" name="Proc. Natl. Acad. Sci. U.S.A.">
        <title>Genome analysis of multiple pathogenic isolates of Streptococcus agalactiae: implications for the microbial 'pan-genome'.</title>
        <authorList>
            <person name="Tettelin H."/>
            <person name="Masignani V."/>
            <person name="Cieslewicz M.J."/>
            <person name="Donati C."/>
            <person name="Medini D."/>
            <person name="Ward N.L."/>
            <person name="Angiuoli S.V."/>
            <person name="Crabtree J."/>
            <person name="Jones A.L."/>
            <person name="Durkin A.S."/>
            <person name="DeBoy R.T."/>
            <person name="Davidsen T.M."/>
            <person name="Mora M."/>
            <person name="Scarselli M."/>
            <person name="Margarit y Ros I."/>
            <person name="Peterson J.D."/>
            <person name="Hauser C.R."/>
            <person name="Sundaram J.P."/>
            <person name="Nelson W.C."/>
            <person name="Madupu R."/>
            <person name="Brinkac L.M."/>
            <person name="Dodson R.J."/>
            <person name="Rosovitz M.J."/>
            <person name="Sullivan S.A."/>
            <person name="Daugherty S.C."/>
            <person name="Haft D.H."/>
            <person name="Selengut J."/>
            <person name="Gwinn M.L."/>
            <person name="Zhou L."/>
            <person name="Zafar N."/>
            <person name="Khouri H."/>
            <person name="Radune D."/>
            <person name="Dimitrov G."/>
            <person name="Watkins K."/>
            <person name="O'Connor K.J."/>
            <person name="Smith S."/>
            <person name="Utterback T.R."/>
            <person name="White O."/>
            <person name="Rubens C.E."/>
            <person name="Grandi G."/>
            <person name="Madoff L.C."/>
            <person name="Kasper D.L."/>
            <person name="Telford J.L."/>
            <person name="Wessels M.R."/>
            <person name="Rappuoli R."/>
            <person name="Fraser C.M."/>
        </authorList>
    </citation>
    <scope>NUCLEOTIDE SEQUENCE [LARGE SCALE GENOMIC DNA]</scope>
    <source>
        <strain>ATCC 27591 / A909 / CDC SS700</strain>
    </source>
</reference>
<dbReference type="EMBL" id="CP000114">
    <property type="protein sequence ID" value="ABA44739.1"/>
    <property type="molecule type" value="Genomic_DNA"/>
</dbReference>
<dbReference type="SMR" id="Q3K2F4"/>
<dbReference type="KEGG" id="sak:SAK_0668"/>
<dbReference type="HOGENOM" id="CLU_221244_1_0_9"/>
<dbReference type="GO" id="GO:0005737">
    <property type="term" value="C:cytoplasm"/>
    <property type="evidence" value="ECO:0007669"/>
    <property type="project" value="UniProtKB-SubCell"/>
</dbReference>
<dbReference type="GO" id="GO:0016149">
    <property type="term" value="F:translation release factor activity, codon specific"/>
    <property type="evidence" value="ECO:0007669"/>
    <property type="project" value="UniProtKB-UniRule"/>
</dbReference>
<dbReference type="Gene3D" id="3.30.160.20">
    <property type="match status" value="1"/>
</dbReference>
<dbReference type="Gene3D" id="3.30.70.1660">
    <property type="match status" value="1"/>
</dbReference>
<dbReference type="Gene3D" id="1.20.58.410">
    <property type="entry name" value="Release factor"/>
    <property type="match status" value="1"/>
</dbReference>
<dbReference type="HAMAP" id="MF_00094">
    <property type="entry name" value="Rel_fac_2"/>
    <property type="match status" value="1"/>
</dbReference>
<dbReference type="InterPro" id="IPR005139">
    <property type="entry name" value="PCRF"/>
</dbReference>
<dbReference type="InterPro" id="IPR000352">
    <property type="entry name" value="Pep_chain_release_fac_I"/>
</dbReference>
<dbReference type="InterPro" id="IPR045853">
    <property type="entry name" value="Pep_chain_release_fac_I_sf"/>
</dbReference>
<dbReference type="InterPro" id="IPR004374">
    <property type="entry name" value="PrfB"/>
</dbReference>
<dbReference type="NCBIfam" id="TIGR00020">
    <property type="entry name" value="prfB"/>
    <property type="match status" value="1"/>
</dbReference>
<dbReference type="PANTHER" id="PTHR43116:SF3">
    <property type="entry name" value="CLASS I PEPTIDE CHAIN RELEASE FACTOR"/>
    <property type="match status" value="1"/>
</dbReference>
<dbReference type="PANTHER" id="PTHR43116">
    <property type="entry name" value="PEPTIDE CHAIN RELEASE FACTOR 2"/>
    <property type="match status" value="1"/>
</dbReference>
<dbReference type="Pfam" id="PF03462">
    <property type="entry name" value="PCRF"/>
    <property type="match status" value="1"/>
</dbReference>
<dbReference type="Pfam" id="PF00472">
    <property type="entry name" value="RF-1"/>
    <property type="match status" value="1"/>
</dbReference>
<dbReference type="SMART" id="SM00937">
    <property type="entry name" value="PCRF"/>
    <property type="match status" value="1"/>
</dbReference>
<dbReference type="SUPFAM" id="SSF75620">
    <property type="entry name" value="Release factor"/>
    <property type="match status" value="1"/>
</dbReference>
<dbReference type="PROSITE" id="PS00745">
    <property type="entry name" value="RF_PROK_I"/>
    <property type="match status" value="1"/>
</dbReference>
<organism>
    <name type="scientific">Streptococcus agalactiae serotype Ia (strain ATCC 27591 / A909 / CDC SS700)</name>
    <dbReference type="NCBI Taxonomy" id="205921"/>
    <lineage>
        <taxon>Bacteria</taxon>
        <taxon>Bacillati</taxon>
        <taxon>Bacillota</taxon>
        <taxon>Bacilli</taxon>
        <taxon>Lactobacillales</taxon>
        <taxon>Streptococcaceae</taxon>
        <taxon>Streptococcus</taxon>
    </lineage>
</organism>
<proteinExistence type="inferred from homology"/>
<keyword id="KW-0963">Cytoplasm</keyword>
<keyword id="KW-0488">Methylation</keyword>
<keyword id="KW-0648">Protein biosynthesis</keyword>
<comment type="function">
    <text evidence="1">Peptide chain release factor 2 directs the termination of translation in response to the peptide chain termination codons UGA and UAA.</text>
</comment>
<comment type="subcellular location">
    <subcellularLocation>
        <location evidence="1">Cytoplasm</location>
    </subcellularLocation>
</comment>
<comment type="PTM">
    <text evidence="1">Methylated by PrmC. Methylation increases the termination efficiency of RF2.</text>
</comment>
<comment type="similarity">
    <text evidence="1">Belongs to the prokaryotic/mitochondrial release factor family.</text>
</comment>
<name>RF2_STRA1</name>
<protein>
    <recommendedName>
        <fullName evidence="1">Peptide chain release factor 2</fullName>
        <shortName evidence="1">RF-2</shortName>
    </recommendedName>
</protein>
<accession>Q3K2F4</accession>
<sequence length="365" mass="41726">MEVAEIRQKIVENKEKLTSFRRSLDLDRLEEEIALLENQMTEPDFWNDNIAAQKTSQELNELKGKYDTFHNMQELSDETELLLEMLDEDDSLKEELEENLMQLDKIMGAYEMTLLLSEPYDHNNAILEIHPGSGGTEAQDWGDLLLRMYTRFGNANGFKVEVLDYQAGDEAGIKSVTLSFEGPNAYGLLKSEMGVHRLVRISPFDSAKRRHTSFASVEVMPELDDTIEVEVRDDDIKMDTFRSGGAGGQNVNKVSTGVRLTHIPTGIVVSSTVDRTQYGNRDRAMKMLQAKLYQLEQEKKAQEVDALKGDKKEITWGSQIRSYVFTPYTMVKDHRTNFELAQVDKVMDGEINGFIDAYLKWRIED</sequence>